<name>SYPL1_HUMAN</name>
<accession>Q16563</accession>
<accession>A4D0R2</accession>
<accession>Q96AR8</accession>
<gene>
    <name type="primary">SYPL1</name>
    <name type="synonym">SYPL</name>
</gene>
<evidence type="ECO:0000250" key="1"/>
<evidence type="ECO:0000255" key="2"/>
<evidence type="ECO:0000255" key="3">
    <source>
        <dbReference type="PROSITE-ProRule" id="PRU00581"/>
    </source>
</evidence>
<evidence type="ECO:0000269" key="4">
    <source>
    </source>
</evidence>
<evidence type="ECO:0000269" key="5">
    <source>
    </source>
</evidence>
<evidence type="ECO:0000303" key="6">
    <source>
    </source>
</evidence>
<evidence type="ECO:0000305" key="7"/>
<evidence type="ECO:0007744" key="8">
    <source>
    </source>
</evidence>
<reference key="1">
    <citation type="journal article" date="1994" name="Differentiation">
        <title>Expression of the synaptophysin gene family is not restricted to neuronal and neuroendocrine differentiation in rat and human.</title>
        <authorList>
            <person name="Leube R.E."/>
        </authorList>
    </citation>
    <scope>NUCLEOTIDE SEQUENCE [MRNA] (ISOFORM 1)</scope>
    <source>
        <tissue>Keratinocyte</tissue>
    </source>
</reference>
<reference key="2">
    <citation type="submission" date="1993-01" db="EMBL/GenBank/DDBJ databases">
        <authorList>
            <person name="Isojima S."/>
        </authorList>
    </citation>
    <scope>NUCLEOTIDE SEQUENCE [MRNA] (ISOFORM 1)</scope>
    <source>
        <tissue>Testis</tissue>
    </source>
</reference>
<reference key="3">
    <citation type="journal article" date="2003" name="Nature">
        <title>The DNA sequence of human chromosome 7.</title>
        <authorList>
            <person name="Hillier L.W."/>
            <person name="Fulton R.S."/>
            <person name="Fulton L.A."/>
            <person name="Graves T.A."/>
            <person name="Pepin K.H."/>
            <person name="Wagner-McPherson C."/>
            <person name="Layman D."/>
            <person name="Maas J."/>
            <person name="Jaeger S."/>
            <person name="Walker R."/>
            <person name="Wylie K."/>
            <person name="Sekhon M."/>
            <person name="Becker M.C."/>
            <person name="O'Laughlin M.D."/>
            <person name="Schaller M.E."/>
            <person name="Fewell G.A."/>
            <person name="Delehaunty K.D."/>
            <person name="Miner T.L."/>
            <person name="Nash W.E."/>
            <person name="Cordes M."/>
            <person name="Du H."/>
            <person name="Sun H."/>
            <person name="Edwards J."/>
            <person name="Bradshaw-Cordum H."/>
            <person name="Ali J."/>
            <person name="Andrews S."/>
            <person name="Isak A."/>
            <person name="Vanbrunt A."/>
            <person name="Nguyen C."/>
            <person name="Du F."/>
            <person name="Lamar B."/>
            <person name="Courtney L."/>
            <person name="Kalicki J."/>
            <person name="Ozersky P."/>
            <person name="Bielicki L."/>
            <person name="Scott K."/>
            <person name="Holmes A."/>
            <person name="Harkins R."/>
            <person name="Harris A."/>
            <person name="Strong C.M."/>
            <person name="Hou S."/>
            <person name="Tomlinson C."/>
            <person name="Dauphin-Kohlberg S."/>
            <person name="Kozlowicz-Reilly A."/>
            <person name="Leonard S."/>
            <person name="Rohlfing T."/>
            <person name="Rock S.M."/>
            <person name="Tin-Wollam A.-M."/>
            <person name="Abbott A."/>
            <person name="Minx P."/>
            <person name="Maupin R."/>
            <person name="Strowmatt C."/>
            <person name="Latreille P."/>
            <person name="Miller N."/>
            <person name="Johnson D."/>
            <person name="Murray J."/>
            <person name="Woessner J.P."/>
            <person name="Wendl M.C."/>
            <person name="Yang S.-P."/>
            <person name="Schultz B.R."/>
            <person name="Wallis J.W."/>
            <person name="Spieth J."/>
            <person name="Bieri T.A."/>
            <person name="Nelson J.O."/>
            <person name="Berkowicz N."/>
            <person name="Wohldmann P.E."/>
            <person name="Cook L.L."/>
            <person name="Hickenbotham M.T."/>
            <person name="Eldred J."/>
            <person name="Williams D."/>
            <person name="Bedell J.A."/>
            <person name="Mardis E.R."/>
            <person name="Clifton S.W."/>
            <person name="Chissoe S.L."/>
            <person name="Marra M.A."/>
            <person name="Raymond C."/>
            <person name="Haugen E."/>
            <person name="Gillett W."/>
            <person name="Zhou Y."/>
            <person name="James R."/>
            <person name="Phelps K."/>
            <person name="Iadanoto S."/>
            <person name="Bubb K."/>
            <person name="Simms E."/>
            <person name="Levy R."/>
            <person name="Clendenning J."/>
            <person name="Kaul R."/>
            <person name="Kent W.J."/>
            <person name="Furey T.S."/>
            <person name="Baertsch R.A."/>
            <person name="Brent M.R."/>
            <person name="Keibler E."/>
            <person name="Flicek P."/>
            <person name="Bork P."/>
            <person name="Suyama M."/>
            <person name="Bailey J.A."/>
            <person name="Portnoy M.E."/>
            <person name="Torrents D."/>
            <person name="Chinwalla A.T."/>
            <person name="Gish W.R."/>
            <person name="Eddy S.R."/>
            <person name="McPherson J.D."/>
            <person name="Olson M.V."/>
            <person name="Eichler E.E."/>
            <person name="Green E.D."/>
            <person name="Waterston R.H."/>
            <person name="Wilson R.K."/>
        </authorList>
    </citation>
    <scope>NUCLEOTIDE SEQUENCE [LARGE SCALE GENOMIC DNA]</scope>
</reference>
<reference key="4">
    <citation type="journal article" date="2003" name="Science">
        <title>Human chromosome 7: DNA sequence and biology.</title>
        <authorList>
            <person name="Scherer S.W."/>
            <person name="Cheung J."/>
            <person name="MacDonald J.R."/>
            <person name="Osborne L.R."/>
            <person name="Nakabayashi K."/>
            <person name="Herbrick J.-A."/>
            <person name="Carson A.R."/>
            <person name="Parker-Katiraee L."/>
            <person name="Skaug J."/>
            <person name="Khaja R."/>
            <person name="Zhang J."/>
            <person name="Hudek A.K."/>
            <person name="Li M."/>
            <person name="Haddad M."/>
            <person name="Duggan G.E."/>
            <person name="Fernandez B.A."/>
            <person name="Kanematsu E."/>
            <person name="Gentles S."/>
            <person name="Christopoulos C.C."/>
            <person name="Choufani S."/>
            <person name="Kwasnicka D."/>
            <person name="Zheng X.H."/>
            <person name="Lai Z."/>
            <person name="Nusskern D.R."/>
            <person name="Zhang Q."/>
            <person name="Gu Z."/>
            <person name="Lu F."/>
            <person name="Zeesman S."/>
            <person name="Nowaczyk M.J."/>
            <person name="Teshima I."/>
            <person name="Chitayat D."/>
            <person name="Shuman C."/>
            <person name="Weksberg R."/>
            <person name="Zackai E.H."/>
            <person name="Grebe T.A."/>
            <person name="Cox S.R."/>
            <person name="Kirkpatrick S.J."/>
            <person name="Rahman N."/>
            <person name="Friedman J.M."/>
            <person name="Heng H.H.Q."/>
            <person name="Pelicci P.G."/>
            <person name="Lo-Coco F."/>
            <person name="Belloni E."/>
            <person name="Shaffer L.G."/>
            <person name="Pober B."/>
            <person name="Morton C.C."/>
            <person name="Gusella J.F."/>
            <person name="Bruns G.A.P."/>
            <person name="Korf B.R."/>
            <person name="Quade B.J."/>
            <person name="Ligon A.H."/>
            <person name="Ferguson H."/>
            <person name="Higgins A.W."/>
            <person name="Leach N.T."/>
            <person name="Herrick S.R."/>
            <person name="Lemyre E."/>
            <person name="Farra C.G."/>
            <person name="Kim H.-G."/>
            <person name="Summers A.M."/>
            <person name="Gripp K.W."/>
            <person name="Roberts W."/>
            <person name="Szatmari P."/>
            <person name="Winsor E.J.T."/>
            <person name="Grzeschik K.-H."/>
            <person name="Teebi A."/>
            <person name="Minassian B.A."/>
            <person name="Kere J."/>
            <person name="Armengol L."/>
            <person name="Pujana M.A."/>
            <person name="Estivill X."/>
            <person name="Wilson M.D."/>
            <person name="Koop B.F."/>
            <person name="Tosi S."/>
            <person name="Moore G.E."/>
            <person name="Boright A.P."/>
            <person name="Zlotorynski E."/>
            <person name="Kerem B."/>
            <person name="Kroisel P.M."/>
            <person name="Petek E."/>
            <person name="Oscier D.G."/>
            <person name="Mould S.J."/>
            <person name="Doehner H."/>
            <person name="Doehner K."/>
            <person name="Rommens J.M."/>
            <person name="Vincent J.B."/>
            <person name="Venter J.C."/>
            <person name="Li P.W."/>
            <person name="Mural R.J."/>
            <person name="Adams M.D."/>
            <person name="Tsui L.-C."/>
        </authorList>
    </citation>
    <scope>NUCLEOTIDE SEQUENCE [LARGE SCALE GENOMIC DNA]</scope>
</reference>
<reference key="5">
    <citation type="submission" date="2005-07" db="EMBL/GenBank/DDBJ databases">
        <authorList>
            <person name="Mural R.J."/>
            <person name="Istrail S."/>
            <person name="Sutton G."/>
            <person name="Florea L."/>
            <person name="Halpern A.L."/>
            <person name="Mobarry C.M."/>
            <person name="Lippert R."/>
            <person name="Walenz B."/>
            <person name="Shatkay H."/>
            <person name="Dew I."/>
            <person name="Miller J.R."/>
            <person name="Flanigan M.J."/>
            <person name="Edwards N.J."/>
            <person name="Bolanos R."/>
            <person name="Fasulo D."/>
            <person name="Halldorsson B.V."/>
            <person name="Hannenhalli S."/>
            <person name="Turner R."/>
            <person name="Yooseph S."/>
            <person name="Lu F."/>
            <person name="Nusskern D.R."/>
            <person name="Shue B.C."/>
            <person name="Zheng X.H."/>
            <person name="Zhong F."/>
            <person name="Delcher A.L."/>
            <person name="Huson D.H."/>
            <person name="Kravitz S.A."/>
            <person name="Mouchard L."/>
            <person name="Reinert K."/>
            <person name="Remington K.A."/>
            <person name="Clark A.G."/>
            <person name="Waterman M.S."/>
            <person name="Eichler E.E."/>
            <person name="Adams M.D."/>
            <person name="Hunkapiller M.W."/>
            <person name="Myers E.W."/>
            <person name="Venter J.C."/>
        </authorList>
    </citation>
    <scope>NUCLEOTIDE SEQUENCE [LARGE SCALE GENOMIC DNA]</scope>
</reference>
<reference key="6">
    <citation type="journal article" date="2004" name="Genome Res.">
        <title>The status, quality, and expansion of the NIH full-length cDNA project: the Mammalian Gene Collection (MGC).</title>
        <authorList>
            <consortium name="The MGC Project Team"/>
        </authorList>
    </citation>
    <scope>NUCLEOTIDE SEQUENCE [LARGE SCALE MRNA] (ISOFORMS 1 AND 2)</scope>
    <source>
        <tissue>Brain</tissue>
        <tissue>Lung</tissue>
    </source>
</reference>
<reference key="7">
    <citation type="journal article" date="1992" name="Biochim. Biophys. Acta">
        <title>Molecular cloning of a cDNA encoding a novel protein related to the neuronal vesicle protein synaptophysin.</title>
        <authorList>
            <person name="Zhong C.Z."/>
            <person name="Hayzer D.J."/>
            <person name="Runge M.S."/>
        </authorList>
    </citation>
    <scope>NUCLEOTIDE SEQUENCE [MRNA] OF 15-165 (ISOFORM 1)</scope>
    <source>
        <tissue>Blood</tissue>
    </source>
</reference>
<reference key="8">
    <citation type="journal article" date="2006" name="J. Proteome Res.">
        <title>Proteomic and bioinformatic characterization of the biogenesis and function of melanosomes.</title>
        <authorList>
            <person name="Chi A."/>
            <person name="Valencia J.C."/>
            <person name="Hu Z.-Z."/>
            <person name="Watabe H."/>
            <person name="Yamaguchi H."/>
            <person name="Mangini N.J."/>
            <person name="Huang H."/>
            <person name="Canfield V.A."/>
            <person name="Cheng K.C."/>
            <person name="Yang F."/>
            <person name="Abe R."/>
            <person name="Yamagishi S."/>
            <person name="Shabanowitz J."/>
            <person name="Hearing V.J."/>
            <person name="Wu C."/>
            <person name="Appella E."/>
            <person name="Hunt D.F."/>
        </authorList>
    </citation>
    <scope>SUBCELLULAR LOCATION [LARGE SCALE ANALYSIS]</scope>
    <source>
        <tissue>Melanoma</tissue>
    </source>
</reference>
<reference key="9">
    <citation type="journal article" date="2009" name="J. Proteome Res.">
        <title>Glycoproteomics analysis of human liver tissue by combination of multiple enzyme digestion and hydrazide chemistry.</title>
        <authorList>
            <person name="Chen R."/>
            <person name="Jiang X."/>
            <person name="Sun D."/>
            <person name="Han G."/>
            <person name="Wang F."/>
            <person name="Ye M."/>
            <person name="Wang L."/>
            <person name="Zou H."/>
        </authorList>
    </citation>
    <scope>GLYCOSYLATION [LARGE SCALE ANALYSIS] AT ASN-71</scope>
    <source>
        <tissue>Liver</tissue>
    </source>
</reference>
<reference key="10">
    <citation type="journal article" date="2011" name="BMC Syst. Biol.">
        <title>Initial characterization of the human central proteome.</title>
        <authorList>
            <person name="Burkard T.R."/>
            <person name="Planyavsky M."/>
            <person name="Kaupe I."/>
            <person name="Breitwieser F.P."/>
            <person name="Buerckstuemmer T."/>
            <person name="Bennett K.L."/>
            <person name="Superti-Furga G."/>
            <person name="Colinge J."/>
        </authorList>
    </citation>
    <scope>IDENTIFICATION BY MASS SPECTROMETRY [LARGE SCALE ANALYSIS]</scope>
</reference>
<reference key="11">
    <citation type="journal article" date="2015" name="Proteomics">
        <title>N-terminome analysis of the human mitochondrial proteome.</title>
        <authorList>
            <person name="Vaca Jacome A.S."/>
            <person name="Rabilloud T."/>
            <person name="Schaeffer-Reiss C."/>
            <person name="Rompais M."/>
            <person name="Ayoub D."/>
            <person name="Lane L."/>
            <person name="Bairoch A."/>
            <person name="Van Dorsselaer A."/>
            <person name="Carapito C."/>
        </authorList>
    </citation>
    <scope>CLEAVAGE OF INITIATOR METHIONINE [LARGE SCALE ANALYSIS] (ISOFORM 2)</scope>
    <scope>IDENTIFICATION BY MASS SPECTROMETRY [LARGE SCALE ANALYSIS]</scope>
</reference>
<keyword id="KW-0025">Alternative splicing</keyword>
<keyword id="KW-0968">Cytoplasmic vesicle</keyword>
<keyword id="KW-0325">Glycoprotein</keyword>
<keyword id="KW-0472">Membrane</keyword>
<keyword id="KW-1267">Proteomics identification</keyword>
<keyword id="KW-1185">Reference proteome</keyword>
<keyword id="KW-0812">Transmembrane</keyword>
<keyword id="KW-1133">Transmembrane helix</keyword>
<feature type="chain" id="PRO_0000179164" description="Synaptophysin-like protein 1">
    <location>
        <begin position="1"/>
        <end position="259"/>
    </location>
</feature>
<feature type="topological domain" description="Cytoplasmic" evidence="2">
    <location>
        <begin position="1"/>
        <end position="33"/>
    </location>
</feature>
<feature type="transmembrane region" description="Helical" evidence="2">
    <location>
        <begin position="34"/>
        <end position="54"/>
    </location>
</feature>
<feature type="topological domain" description="Vesicular" evidence="2">
    <location>
        <begin position="55"/>
        <end position="116"/>
    </location>
</feature>
<feature type="transmembrane region" description="Helical" evidence="2">
    <location>
        <begin position="117"/>
        <end position="137"/>
    </location>
</feature>
<feature type="topological domain" description="Cytoplasmic" evidence="2">
    <location>
        <begin position="138"/>
        <end position="150"/>
    </location>
</feature>
<feature type="transmembrane region" description="Helical" evidence="2">
    <location>
        <begin position="151"/>
        <end position="171"/>
    </location>
</feature>
<feature type="topological domain" description="Vesicular" evidence="2">
    <location>
        <begin position="172"/>
        <end position="212"/>
    </location>
</feature>
<feature type="transmembrane region" description="Helical" evidence="2">
    <location>
        <begin position="213"/>
        <end position="233"/>
    </location>
</feature>
<feature type="topological domain" description="Cytoplasmic" evidence="2">
    <location>
        <begin position="234"/>
        <end position="259"/>
    </location>
</feature>
<feature type="domain" description="MARVEL" evidence="3">
    <location>
        <begin position="28"/>
        <end position="237"/>
    </location>
</feature>
<feature type="glycosylation site" description="N-linked (GlcNAc...) asparagine" evidence="5">
    <location>
        <position position="71"/>
    </location>
</feature>
<feature type="glycosylation site" description="N-linked (GlcNAc...) asparagine" evidence="2">
    <location>
        <position position="212"/>
    </location>
</feature>
<feature type="splice variant" id="VSP_008557" description="In isoform 2." evidence="6">
    <location>
        <begin position="1"/>
        <end position="18"/>
    </location>
</feature>
<feature type="sequence conflict" description="In Ref. 7; X61382." evidence="7" ref="7">
    <original>LGQRM</original>
    <variation>HLQGR</variation>
    <location>
        <begin position="15"/>
        <end position="19"/>
    </location>
</feature>
<feature type="sequence conflict" description="In Ref. 7." evidence="7" ref="7">
    <original>LWL</original>
    <variation>CGW</variation>
    <location>
        <begin position="163"/>
        <end position="165"/>
    </location>
</feature>
<feature type="initiator methionine" description="Removed" evidence="8">
    <location sequence="Q16563-2">
        <position position="1"/>
    </location>
</feature>
<dbReference type="EMBL" id="S72481">
    <property type="protein sequence ID" value="AAB31344.1"/>
    <property type="molecule type" value="mRNA"/>
</dbReference>
<dbReference type="EMBL" id="X68194">
    <property type="protein sequence ID" value="CAA48276.1"/>
    <property type="molecule type" value="mRNA"/>
</dbReference>
<dbReference type="EMBL" id="AC005095">
    <property type="protein sequence ID" value="AAD50513.1"/>
    <property type="molecule type" value="Genomic_DNA"/>
</dbReference>
<dbReference type="EMBL" id="CH236947">
    <property type="protein sequence ID" value="EAL24402.1"/>
    <property type="molecule type" value="Genomic_DNA"/>
</dbReference>
<dbReference type="EMBL" id="CH471070">
    <property type="protein sequence ID" value="EAW83380.1"/>
    <property type="molecule type" value="Genomic_DNA"/>
</dbReference>
<dbReference type="EMBL" id="BC016835">
    <property type="protein sequence ID" value="AAH16835.3"/>
    <property type="molecule type" value="mRNA"/>
</dbReference>
<dbReference type="EMBL" id="BC020938">
    <property type="protein sequence ID" value="AAH20938.1"/>
    <property type="molecule type" value="mRNA"/>
</dbReference>
<dbReference type="EMBL" id="BC061887">
    <property type="protein sequence ID" value="AAH61887.1"/>
    <property type="molecule type" value="mRNA"/>
</dbReference>
<dbReference type="EMBL" id="X61382">
    <property type="status" value="NOT_ANNOTATED_CDS"/>
    <property type="molecule type" value="mRNA"/>
</dbReference>
<dbReference type="CCDS" id="CCDS47685.1">
    <molecule id="Q16563-2"/>
</dbReference>
<dbReference type="CCDS" id="CCDS5736.1">
    <molecule id="Q16563-1"/>
</dbReference>
<dbReference type="PIR" id="I53171">
    <property type="entry name" value="I53171"/>
</dbReference>
<dbReference type="PIR" id="S20316">
    <property type="entry name" value="S20316"/>
</dbReference>
<dbReference type="RefSeq" id="NP_006745.1">
    <molecule id="Q16563-1"/>
    <property type="nucleotide sequence ID" value="NM_006754.5"/>
</dbReference>
<dbReference type="RefSeq" id="NP_874384.1">
    <molecule id="Q16563-2"/>
    <property type="nucleotide sequence ID" value="NM_182715.4"/>
</dbReference>
<dbReference type="SMR" id="Q16563"/>
<dbReference type="BioGRID" id="112722">
    <property type="interactions" value="43"/>
</dbReference>
<dbReference type="FunCoup" id="Q16563">
    <property type="interactions" value="758"/>
</dbReference>
<dbReference type="IntAct" id="Q16563">
    <property type="interactions" value="24"/>
</dbReference>
<dbReference type="STRING" id="9606.ENSP00000011473"/>
<dbReference type="GlyConnect" id="1783">
    <property type="glycosylation" value="15 N-Linked glycans (1 site)"/>
</dbReference>
<dbReference type="GlyCosmos" id="Q16563">
    <property type="glycosylation" value="2 sites, 17 glycans"/>
</dbReference>
<dbReference type="GlyGen" id="Q16563">
    <property type="glycosylation" value="5 sites, 63 N-linked glycans (2 sites), 1 O-linked glycan (1 site)"/>
</dbReference>
<dbReference type="iPTMnet" id="Q16563"/>
<dbReference type="PhosphoSitePlus" id="Q16563"/>
<dbReference type="SwissPalm" id="Q16563"/>
<dbReference type="BioMuta" id="SYPL1"/>
<dbReference type="DMDM" id="48474786"/>
<dbReference type="jPOST" id="Q16563"/>
<dbReference type="MassIVE" id="Q16563"/>
<dbReference type="PaxDb" id="9606-ENSP00000011473"/>
<dbReference type="PeptideAtlas" id="Q16563"/>
<dbReference type="ProteomicsDB" id="60919">
    <molecule id="Q16563-1"/>
</dbReference>
<dbReference type="ProteomicsDB" id="60920">
    <molecule id="Q16563-2"/>
</dbReference>
<dbReference type="Pumba" id="Q16563"/>
<dbReference type="Antibodypedia" id="2819">
    <property type="antibodies" value="155 antibodies from 25 providers"/>
</dbReference>
<dbReference type="DNASU" id="6856"/>
<dbReference type="Ensembl" id="ENST00000011473.6">
    <molecule id="Q16563-1"/>
    <property type="protein sequence ID" value="ENSP00000011473.2"/>
    <property type="gene ID" value="ENSG00000008282.10"/>
</dbReference>
<dbReference type="Ensembl" id="ENST00000455385.7">
    <molecule id="Q16563-2"/>
    <property type="protein sequence ID" value="ENSP00000388336.2"/>
    <property type="gene ID" value="ENSG00000008282.10"/>
</dbReference>
<dbReference type="GeneID" id="6856"/>
<dbReference type="KEGG" id="hsa:6856"/>
<dbReference type="MANE-Select" id="ENST00000455385.7">
    <molecule id="Q16563-2"/>
    <property type="protein sequence ID" value="ENSP00000388336.2"/>
    <property type="RefSeq nucleotide sequence ID" value="NM_182715.4"/>
    <property type="RefSeq protein sequence ID" value="NP_874384.1"/>
</dbReference>
<dbReference type="UCSC" id="uc003vdo.5">
    <molecule id="Q16563-1"/>
    <property type="organism name" value="human"/>
</dbReference>
<dbReference type="AGR" id="HGNC:11507"/>
<dbReference type="CTD" id="6856"/>
<dbReference type="DisGeNET" id="6856"/>
<dbReference type="GeneCards" id="SYPL1"/>
<dbReference type="HGNC" id="HGNC:11507">
    <property type="gene designation" value="SYPL1"/>
</dbReference>
<dbReference type="HPA" id="ENSG00000008282">
    <property type="expression patterns" value="Low tissue specificity"/>
</dbReference>
<dbReference type="neXtProt" id="NX_Q16563"/>
<dbReference type="OpenTargets" id="ENSG00000008282"/>
<dbReference type="PharmGKB" id="PA36289"/>
<dbReference type="VEuPathDB" id="HostDB:ENSG00000008282"/>
<dbReference type="eggNOG" id="ENOG502RY2D">
    <property type="taxonomic scope" value="Eukaryota"/>
</dbReference>
<dbReference type="GeneTree" id="ENSGT01030000234637"/>
<dbReference type="HOGENOM" id="CLU_064642_1_0_1"/>
<dbReference type="InParanoid" id="Q16563"/>
<dbReference type="OMA" id="VYIGYKH"/>
<dbReference type="OrthoDB" id="10006326at2759"/>
<dbReference type="PAN-GO" id="Q16563">
    <property type="GO annotations" value="1 GO annotation based on evolutionary models"/>
</dbReference>
<dbReference type="PhylomeDB" id="Q16563"/>
<dbReference type="TreeFam" id="TF315804"/>
<dbReference type="PathwayCommons" id="Q16563"/>
<dbReference type="SignaLink" id="Q16563"/>
<dbReference type="BioGRID-ORCS" id="6856">
    <property type="hits" value="16 hits in 1163 CRISPR screens"/>
</dbReference>
<dbReference type="ChiTaRS" id="SYPL1">
    <property type="organism name" value="human"/>
</dbReference>
<dbReference type="GeneWiki" id="SYPL1"/>
<dbReference type="GenomeRNAi" id="6856"/>
<dbReference type="Pharos" id="Q16563">
    <property type="development level" value="Tbio"/>
</dbReference>
<dbReference type="PRO" id="PR:Q16563"/>
<dbReference type="Proteomes" id="UP000005640">
    <property type="component" value="Chromosome 7"/>
</dbReference>
<dbReference type="RNAct" id="Q16563">
    <property type="molecule type" value="protein"/>
</dbReference>
<dbReference type="Bgee" id="ENSG00000008282">
    <property type="expression patterns" value="Expressed in epithelium of nasopharynx and 204 other cell types or tissues"/>
</dbReference>
<dbReference type="ExpressionAtlas" id="Q16563">
    <property type="expression patterns" value="baseline and differential"/>
</dbReference>
<dbReference type="GO" id="GO:0070062">
    <property type="term" value="C:extracellular exosome"/>
    <property type="evidence" value="ECO:0007005"/>
    <property type="project" value="UniProtKB"/>
</dbReference>
<dbReference type="GO" id="GO:0042470">
    <property type="term" value="C:melanosome"/>
    <property type="evidence" value="ECO:0007669"/>
    <property type="project" value="UniProtKB-SubCell"/>
</dbReference>
<dbReference type="GO" id="GO:0016020">
    <property type="term" value="C:membrane"/>
    <property type="evidence" value="ECO:0000304"/>
    <property type="project" value="ProtInc"/>
</dbReference>
<dbReference type="GO" id="GO:0005886">
    <property type="term" value="C:plasma membrane"/>
    <property type="evidence" value="ECO:0000304"/>
    <property type="project" value="ProtInc"/>
</dbReference>
<dbReference type="GO" id="GO:0030141">
    <property type="term" value="C:secretory granule"/>
    <property type="evidence" value="ECO:0007669"/>
    <property type="project" value="Ensembl"/>
</dbReference>
<dbReference type="GO" id="GO:0030672">
    <property type="term" value="C:synaptic vesicle membrane"/>
    <property type="evidence" value="ECO:0000318"/>
    <property type="project" value="GO_Central"/>
</dbReference>
<dbReference type="GO" id="GO:0007268">
    <property type="term" value="P:chemical synaptic transmission"/>
    <property type="evidence" value="ECO:0000304"/>
    <property type="project" value="ProtInc"/>
</dbReference>
<dbReference type="InterPro" id="IPR008253">
    <property type="entry name" value="Marvel"/>
</dbReference>
<dbReference type="InterPro" id="IPR001285">
    <property type="entry name" value="Synaptophysin/porin"/>
</dbReference>
<dbReference type="PANTHER" id="PTHR10306">
    <property type="entry name" value="SYNAPTOPHYSIN"/>
    <property type="match status" value="1"/>
</dbReference>
<dbReference type="PANTHER" id="PTHR10306:SF9">
    <property type="entry name" value="SYNAPTOPHYSIN-LIKE PROTEIN 1"/>
    <property type="match status" value="1"/>
</dbReference>
<dbReference type="Pfam" id="PF01284">
    <property type="entry name" value="MARVEL"/>
    <property type="match status" value="1"/>
</dbReference>
<dbReference type="PRINTS" id="PR00220">
    <property type="entry name" value="SYNAPTOPHYSN"/>
</dbReference>
<dbReference type="PROSITE" id="PS51225">
    <property type="entry name" value="MARVEL"/>
    <property type="match status" value="1"/>
</dbReference>
<protein>
    <recommendedName>
        <fullName>Synaptophysin-like protein 1</fullName>
    </recommendedName>
    <alternativeName>
        <fullName>Pantophysin</fullName>
    </alternativeName>
</protein>
<proteinExistence type="evidence at protein level"/>
<sequence>MAPNIYLVRQRISRLGQRMSGFQINLNPLKEPLGFIKVLEWIASIFAFATCGGFKGQTEIQVNCPPAVTENKTVTATFGYPFRLNEASFQPPPGVNICDVNWKDYVLIGDYSSSAQFYVTFAVFVFLYCIAALLLYVGYTSLYLDSRKLPMIDFVVTLVATFLWLVSTSAWAKALTDIKIATGHNIIDELPPCKKKAVLCYFGSVTSMGSLNVSVIFGFLNMILWGGNAWFVYKETSLHSPSNTSAPHSQGGIPPPTGI</sequence>
<comment type="interaction">
    <interactant intactId="EBI-2800683">
        <id>Q16563</id>
    </interactant>
    <interactant intactId="EBI-2848814">
        <id>Q92685</id>
        <label>ALG3</label>
    </interactant>
    <organismsDiffer>false</organismsDiffer>
    <experiments>3</experiments>
</comment>
<comment type="interaction">
    <interactant intactId="EBI-2800683">
        <id>Q16563</id>
    </interactant>
    <interactant intactId="EBI-2875816">
        <id>Q9NP61</id>
        <label>ARFGAP3</label>
    </interactant>
    <organismsDiffer>false</organismsDiffer>
    <experiments>3</experiments>
</comment>
<comment type="interaction">
    <interactant intactId="EBI-2800683">
        <id>Q16563</id>
    </interactant>
    <interactant intactId="EBI-10292696">
        <id>Q96Q77</id>
        <label>CIB3</label>
    </interactant>
    <organismsDiffer>false</organismsDiffer>
    <experiments>3</experiments>
</comment>
<comment type="interaction">
    <interactant intactId="EBI-2800683">
        <id>Q16563</id>
    </interactant>
    <interactant intactId="EBI-741171">
        <id>Q96AL5</id>
        <label>PBX3</label>
    </interactant>
    <organismsDiffer>false</organismsDiffer>
    <experiments>3</experiments>
</comment>
<comment type="interaction">
    <interactant intactId="EBI-2800683">
        <id>Q16563</id>
    </interactant>
    <interactant intactId="EBI-5544229">
        <id>P30405</id>
        <label>PPIF</label>
    </interactant>
    <organismsDiffer>false</organismsDiffer>
    <experiments>3</experiments>
</comment>
<comment type="interaction">
    <interactant intactId="EBI-2800683">
        <id>Q16563</id>
    </interactant>
    <interactant intactId="EBI-3232108">
        <id>Q8N0V3</id>
        <label>RBFA</label>
    </interactant>
    <organismsDiffer>false</organismsDiffer>
    <experiments>3</experiments>
</comment>
<comment type="interaction">
    <interactant intactId="EBI-2800683">
        <id>Q16563</id>
    </interactant>
    <interactant intactId="EBI-727004">
        <id>O00560</id>
        <label>SDCBP</label>
    </interactant>
    <organismsDiffer>false</organismsDiffer>
    <experiments>3</experiments>
</comment>
<comment type="interaction">
    <interactant intactId="EBI-2800683">
        <id>Q16563</id>
    </interactant>
    <interactant intactId="EBI-1045099">
        <id>Q9BW92</id>
        <label>TARS2</label>
    </interactant>
    <organismsDiffer>false</organismsDiffer>
    <experiments>3</experiments>
</comment>
<comment type="interaction">
    <interactant intactId="EBI-2800683">
        <id>Q16563</id>
    </interactant>
    <interactant intactId="EBI-10278496">
        <id>Q53QW1</id>
        <label>TEX44</label>
    </interactant>
    <organismsDiffer>false</organismsDiffer>
    <experiments>3</experiments>
</comment>
<comment type="subcellular location">
    <subcellularLocation>
        <location evidence="1">Cytoplasmic vesicle membrane</location>
        <topology evidence="1">Multi-pass membrane protein</topology>
    </subcellularLocation>
    <subcellularLocation>
        <location evidence="4">Melanosome</location>
    </subcellularLocation>
    <text evidence="1">Cytoplasmic transport vesicles (By similarity). Identified by mass spectrometry in melanosome fractions from stage I to stage IV.</text>
</comment>
<comment type="alternative products">
    <event type="alternative splicing"/>
    <isoform>
        <id>Q16563-1</id>
        <name>1</name>
        <sequence type="displayed"/>
    </isoform>
    <isoform>
        <id>Q16563-2</id>
        <name>2</name>
        <sequence type="described" ref="VSP_008557"/>
    </isoform>
</comment>
<comment type="similarity">
    <text evidence="7">Belongs to the synaptophysin/synaptobrevin family.</text>
</comment>
<organism>
    <name type="scientific">Homo sapiens</name>
    <name type="common">Human</name>
    <dbReference type="NCBI Taxonomy" id="9606"/>
    <lineage>
        <taxon>Eukaryota</taxon>
        <taxon>Metazoa</taxon>
        <taxon>Chordata</taxon>
        <taxon>Craniata</taxon>
        <taxon>Vertebrata</taxon>
        <taxon>Euteleostomi</taxon>
        <taxon>Mammalia</taxon>
        <taxon>Eutheria</taxon>
        <taxon>Euarchontoglires</taxon>
        <taxon>Primates</taxon>
        <taxon>Haplorrhini</taxon>
        <taxon>Catarrhini</taxon>
        <taxon>Hominidae</taxon>
        <taxon>Homo</taxon>
    </lineage>
</organism>